<keyword id="KW-0164">Citrullination</keyword>
<keyword id="KW-0217">Developmental protein</keyword>
<keyword id="KW-0221">Differentiation</keyword>
<keyword id="KW-0238">DNA-binding</keyword>
<keyword id="KW-0597">Phosphoprotein</keyword>
<keyword id="KW-1185">Reference proteome</keyword>
<keyword id="KW-0744">Spermatogenesis</keyword>
<gene>
    <name evidence="2" type="primary">H1-6</name>
    <name type="synonym">H1FT</name>
    <name type="synonym">H1T</name>
</gene>
<feature type="initiator methionine" description="Removed" evidence="7">
    <location>
        <position position="1"/>
    </location>
</feature>
<feature type="chain" id="PRO_0000195911" description="Histone H1t">
    <location>
        <begin position="2"/>
        <end position="208"/>
    </location>
</feature>
<feature type="domain" description="H15" evidence="5">
    <location>
        <begin position="40"/>
        <end position="113"/>
    </location>
</feature>
<feature type="region of interest" description="Disordered" evidence="6">
    <location>
        <begin position="1"/>
        <end position="40"/>
    </location>
</feature>
<feature type="region of interest" description="Disordered" evidence="6">
    <location>
        <begin position="102"/>
        <end position="208"/>
    </location>
</feature>
<feature type="compositionally biased region" description="Low complexity" evidence="6">
    <location>
        <begin position="1"/>
        <end position="16"/>
    </location>
</feature>
<feature type="compositionally biased region" description="Basic residues" evidence="6">
    <location>
        <begin position="111"/>
        <end position="136"/>
    </location>
</feature>
<feature type="compositionally biased region" description="Basic residues" evidence="6">
    <location>
        <begin position="148"/>
        <end position="157"/>
    </location>
</feature>
<feature type="compositionally biased region" description="Basic residues" evidence="6">
    <location>
        <begin position="163"/>
        <end position="175"/>
    </location>
</feature>
<feature type="compositionally biased region" description="Basic residues" evidence="6">
    <location>
        <begin position="187"/>
        <end position="208"/>
    </location>
</feature>
<feature type="site" description="Important for nucleosome binding properties" evidence="1">
    <location>
        <position position="56"/>
    </location>
</feature>
<feature type="modified residue" description="Phosphoserine" evidence="4">
    <location>
        <position position="9"/>
    </location>
</feature>
<feature type="modified residue" description="Citrulline" evidence="3">
    <location>
        <position position="58"/>
    </location>
</feature>
<feature type="modified residue" description="Phosphoserine" evidence="4">
    <location>
        <position position="143"/>
    </location>
</feature>
<feature type="modified residue" description="Phosphothreonine" evidence="4">
    <location>
        <position position="159"/>
    </location>
</feature>
<feature type="modified residue" description="Phosphoserine" evidence="4">
    <location>
        <position position="167"/>
    </location>
</feature>
<feature type="modified residue" description="Phosphoserine" evidence="4">
    <location>
        <position position="182"/>
    </location>
</feature>
<name>H1T_MACMU</name>
<evidence type="ECO:0000250" key="1">
    <source>
        <dbReference type="UniProtKB" id="P06349"/>
    </source>
</evidence>
<evidence type="ECO:0000250" key="2">
    <source>
        <dbReference type="UniProtKB" id="P22492"/>
    </source>
</evidence>
<evidence type="ECO:0000250" key="3">
    <source>
        <dbReference type="UniProtKB" id="P43275"/>
    </source>
</evidence>
<evidence type="ECO:0000250" key="4">
    <source>
        <dbReference type="UniProtKB" id="Q07133"/>
    </source>
</evidence>
<evidence type="ECO:0000255" key="5">
    <source>
        <dbReference type="PROSITE-ProRule" id="PRU00837"/>
    </source>
</evidence>
<evidence type="ECO:0000256" key="6">
    <source>
        <dbReference type="SAM" id="MobiDB-lite"/>
    </source>
</evidence>
<evidence type="ECO:0000305" key="7"/>
<comment type="function">
    <text evidence="2">Testis-specific histone H1 that forms less compacted chromatin compared to other H1 histone subtypes. Formation of more relaxed chromatin may be required to promote chromatin architecture required for proper chromosome regulation during meiosis, such as homologous recombination. Histones H1 act as linkers that bind to nucleosomes and compact polynucleosomes into a higher-order chromatin configuration.</text>
</comment>
<comment type="PTM">
    <text evidence="1">Phosphorylated in early spermatids.</text>
</comment>
<comment type="PTM">
    <text evidence="3">Citrullination at Arg-58 (H1R54ci) by PADI4 takes place within the DNA-binding site of H1 and results in its displacement from chromatin and global chromatin decondensation, thereby promoting pluripotency and stem cell maintenance.</text>
</comment>
<comment type="similarity">
    <text evidence="5">Belongs to the histone H1/H5 family.</text>
</comment>
<accession>P40286</accession>
<proteinExistence type="inferred from homology"/>
<sequence>MSETVPAASAGAVPAVMEKPLTKKRGKKPAGLTSASRKAPNLSVSKLITEALSVSQERVGMSLAALKKALAAAGYDVEKNNSRIKLSLKSLVNKGILVQTRGTGASGSFKLSKKVLPKSTRRKANKSASAKTKKLVLSRDSKSPKTAKTNKRAKKPRATAPKKAVRSGRKAKGAKGKQQQKSPVKARATKPKLTQHHKANIRKATSRK</sequence>
<protein>
    <recommendedName>
        <fullName>Histone H1t</fullName>
    </recommendedName>
    <alternativeName>
        <fullName>Testicular H1 histone</fullName>
    </alternativeName>
</protein>
<dbReference type="EMBL" id="M97756">
    <property type="protein sequence ID" value="AAA19937.1"/>
    <property type="molecule type" value="Unassigned_DNA"/>
</dbReference>
<dbReference type="PIR" id="I70195">
    <property type="entry name" value="I70195"/>
</dbReference>
<dbReference type="RefSeq" id="NP_001074230.1">
    <property type="nucleotide sequence ID" value="NM_001080761.1"/>
</dbReference>
<dbReference type="SMR" id="P40286"/>
<dbReference type="FunCoup" id="P40286">
    <property type="interactions" value="491"/>
</dbReference>
<dbReference type="STRING" id="9544.ENSMMUP00000079159"/>
<dbReference type="PaxDb" id="9544-ENSMMUP00000031274"/>
<dbReference type="Ensembl" id="ENSMMUT00000083249.1">
    <property type="protein sequence ID" value="ENSMMUP00000079159.1"/>
    <property type="gene ID" value="ENSMMUG00000051980.1"/>
</dbReference>
<dbReference type="GeneID" id="696375"/>
<dbReference type="KEGG" id="mcc:696375"/>
<dbReference type="CTD" id="3010"/>
<dbReference type="VEuPathDB" id="HostDB:ENSMMUG00000051980"/>
<dbReference type="VGNC" id="VGNC:109749">
    <property type="gene designation" value="H1-6"/>
</dbReference>
<dbReference type="eggNOG" id="KOG4012">
    <property type="taxonomic scope" value="Eukaryota"/>
</dbReference>
<dbReference type="GeneTree" id="ENSGT00940000163525"/>
<dbReference type="HOGENOM" id="CLU_052897_7_0_1"/>
<dbReference type="InParanoid" id="P40286"/>
<dbReference type="OMA" id="QHHKANI"/>
<dbReference type="OrthoDB" id="9634976at2759"/>
<dbReference type="TreeFam" id="TF313664"/>
<dbReference type="Proteomes" id="UP000006718">
    <property type="component" value="Chromosome 4"/>
</dbReference>
<dbReference type="Bgee" id="ENSMMUG00000051980">
    <property type="expression patterns" value="Expressed in spermatocyte and 2 other cell types or tissues"/>
</dbReference>
<dbReference type="ExpressionAtlas" id="P40286">
    <property type="expression patterns" value="baseline"/>
</dbReference>
<dbReference type="GO" id="GO:0000786">
    <property type="term" value="C:nucleosome"/>
    <property type="evidence" value="ECO:0007669"/>
    <property type="project" value="InterPro"/>
</dbReference>
<dbReference type="GO" id="GO:0005634">
    <property type="term" value="C:nucleus"/>
    <property type="evidence" value="ECO:0000318"/>
    <property type="project" value="GO_Central"/>
</dbReference>
<dbReference type="GO" id="GO:0003690">
    <property type="term" value="F:double-stranded DNA binding"/>
    <property type="evidence" value="ECO:0000318"/>
    <property type="project" value="GO_Central"/>
</dbReference>
<dbReference type="GO" id="GO:0031492">
    <property type="term" value="F:nucleosomal DNA binding"/>
    <property type="evidence" value="ECO:0000318"/>
    <property type="project" value="GO_Central"/>
</dbReference>
<dbReference type="GO" id="GO:0030527">
    <property type="term" value="F:structural constituent of chromatin"/>
    <property type="evidence" value="ECO:0007669"/>
    <property type="project" value="InterPro"/>
</dbReference>
<dbReference type="GO" id="GO:0030154">
    <property type="term" value="P:cell differentiation"/>
    <property type="evidence" value="ECO:0007669"/>
    <property type="project" value="UniProtKB-KW"/>
</dbReference>
<dbReference type="GO" id="GO:0030261">
    <property type="term" value="P:chromosome condensation"/>
    <property type="evidence" value="ECO:0000318"/>
    <property type="project" value="GO_Central"/>
</dbReference>
<dbReference type="GO" id="GO:0045910">
    <property type="term" value="P:negative regulation of DNA recombination"/>
    <property type="evidence" value="ECO:0000318"/>
    <property type="project" value="GO_Central"/>
</dbReference>
<dbReference type="GO" id="GO:0006334">
    <property type="term" value="P:nucleosome assembly"/>
    <property type="evidence" value="ECO:0007669"/>
    <property type="project" value="InterPro"/>
</dbReference>
<dbReference type="GO" id="GO:0007283">
    <property type="term" value="P:spermatogenesis"/>
    <property type="evidence" value="ECO:0000318"/>
    <property type="project" value="GO_Central"/>
</dbReference>
<dbReference type="FunFam" id="1.10.10.10:FF:000075">
    <property type="entry name" value="Histone H1 like"/>
    <property type="match status" value="1"/>
</dbReference>
<dbReference type="Gene3D" id="1.10.10.10">
    <property type="entry name" value="Winged helix-like DNA-binding domain superfamily/Winged helix DNA-binding domain"/>
    <property type="match status" value="1"/>
</dbReference>
<dbReference type="InterPro" id="IPR005819">
    <property type="entry name" value="H1/H5"/>
</dbReference>
<dbReference type="InterPro" id="IPR005818">
    <property type="entry name" value="Histone_H1/H5_H15"/>
</dbReference>
<dbReference type="InterPro" id="IPR036388">
    <property type="entry name" value="WH-like_DNA-bd_sf"/>
</dbReference>
<dbReference type="InterPro" id="IPR036390">
    <property type="entry name" value="WH_DNA-bd_sf"/>
</dbReference>
<dbReference type="Pfam" id="PF00538">
    <property type="entry name" value="Linker_histone"/>
    <property type="match status" value="1"/>
</dbReference>
<dbReference type="PRINTS" id="PR00624">
    <property type="entry name" value="HISTONEH5"/>
</dbReference>
<dbReference type="SMART" id="SM00526">
    <property type="entry name" value="H15"/>
    <property type="match status" value="1"/>
</dbReference>
<dbReference type="SUPFAM" id="SSF46785">
    <property type="entry name" value="Winged helix' DNA-binding domain"/>
    <property type="match status" value="1"/>
</dbReference>
<dbReference type="PROSITE" id="PS51504">
    <property type="entry name" value="H15"/>
    <property type="match status" value="1"/>
</dbReference>
<organism>
    <name type="scientific">Macaca mulatta</name>
    <name type="common">Rhesus macaque</name>
    <dbReference type="NCBI Taxonomy" id="9544"/>
    <lineage>
        <taxon>Eukaryota</taxon>
        <taxon>Metazoa</taxon>
        <taxon>Chordata</taxon>
        <taxon>Craniata</taxon>
        <taxon>Vertebrata</taxon>
        <taxon>Euteleostomi</taxon>
        <taxon>Mammalia</taxon>
        <taxon>Eutheria</taxon>
        <taxon>Euarchontoglires</taxon>
        <taxon>Primates</taxon>
        <taxon>Haplorrhini</taxon>
        <taxon>Catarrhini</taxon>
        <taxon>Cercopithecidae</taxon>
        <taxon>Cercopithecinae</taxon>
        <taxon>Macaca</taxon>
    </lineage>
</organism>
<reference key="1">
    <citation type="journal article" date="1994" name="J. Cell. Biochem.">
        <title>Primate testicular histone H1t genes are highly conserved and the human H1t gene is located on chromosome 6.</title>
        <authorList>
            <person name="Koppel D.A."/>
            <person name="Wolfe S.A."/>
            <person name="Fogelfeld L."/>
            <person name="Grimes S.R."/>
        </authorList>
    </citation>
    <scope>NUCLEOTIDE SEQUENCE</scope>
</reference>